<dbReference type="EMBL" id="M27692">
    <property type="protein sequence ID" value="AAA49426.1"/>
    <property type="status" value="ALT_INIT"/>
    <property type="molecule type" value="mRNA"/>
</dbReference>
<dbReference type="EMBL" id="K02613">
    <property type="protein sequence ID" value="AAA49424.1"/>
    <property type="molecule type" value="mRNA"/>
</dbReference>
<dbReference type="EMBL" id="K02614">
    <property type="protein sequence ID" value="AAA49425.1"/>
    <property type="molecule type" value="mRNA"/>
</dbReference>
<dbReference type="EMBL" id="X01122">
    <property type="protein sequence ID" value="CAA25591.1"/>
    <property type="molecule type" value="mRNA"/>
</dbReference>
<dbReference type="PIR" id="I51080">
    <property type="entry name" value="CTONPK"/>
</dbReference>
<dbReference type="iPTMnet" id="P10000"/>
<dbReference type="OrthoDB" id="8962839at2759"/>
<dbReference type="GO" id="GO:0005576">
    <property type="term" value="C:extracellular region"/>
    <property type="evidence" value="ECO:0007669"/>
    <property type="project" value="UniProtKB-SubCell"/>
</dbReference>
<dbReference type="GO" id="GO:0005184">
    <property type="term" value="F:neuropeptide hormone activity"/>
    <property type="evidence" value="ECO:0007669"/>
    <property type="project" value="TreeGrafter"/>
</dbReference>
<dbReference type="GO" id="GO:0007218">
    <property type="term" value="P:neuropeptide signaling pathway"/>
    <property type="evidence" value="ECO:0007669"/>
    <property type="project" value="UniProtKB-KW"/>
</dbReference>
<dbReference type="InterPro" id="IPR013531">
    <property type="entry name" value="Mcrtin_ACTH_cent"/>
</dbReference>
<dbReference type="InterPro" id="IPR013593">
    <property type="entry name" value="Melanocortin_N"/>
</dbReference>
<dbReference type="InterPro" id="IPR013532">
    <property type="entry name" value="Opioid_neuropept"/>
</dbReference>
<dbReference type="InterPro" id="IPR001941">
    <property type="entry name" value="PMOC"/>
</dbReference>
<dbReference type="InterPro" id="IPR050878">
    <property type="entry name" value="POMC-derived_peptides"/>
</dbReference>
<dbReference type="PANTHER" id="PTHR11416">
    <property type="entry name" value="PRO-OPIOMELANOCORTIN"/>
    <property type="match status" value="1"/>
</dbReference>
<dbReference type="PANTHER" id="PTHR11416:SF7">
    <property type="entry name" value="PRO-OPIOMELANOCORTIN"/>
    <property type="match status" value="1"/>
</dbReference>
<dbReference type="Pfam" id="PF00976">
    <property type="entry name" value="ACTH_domain"/>
    <property type="match status" value="2"/>
</dbReference>
<dbReference type="Pfam" id="PF08384">
    <property type="entry name" value="NPP"/>
    <property type="match status" value="1"/>
</dbReference>
<dbReference type="Pfam" id="PF08035">
    <property type="entry name" value="Op_neuropeptide"/>
    <property type="match status" value="1"/>
</dbReference>
<dbReference type="PRINTS" id="PR00383">
    <property type="entry name" value="MELANOCORTIN"/>
</dbReference>
<dbReference type="SMART" id="SM01363">
    <property type="entry name" value="ACTH_domain"/>
    <property type="match status" value="2"/>
</dbReference>
<dbReference type="SMART" id="SM01364">
    <property type="entry name" value="NPP"/>
    <property type="match status" value="1"/>
</dbReference>
<dbReference type="SMART" id="SM01365">
    <property type="entry name" value="Op_neuropeptide"/>
    <property type="match status" value="1"/>
</dbReference>
<sequence length="226" mass="24982">MVCAPWLLAVVVVCVCNPGVGGQCWDSSHCKDLPSEDKILECTHLFRSGLQDESPEPRSAAQQSTEESLSLGILLAALTSGERALDADPEPHSDKRHSYSMEHFRWGKPIGHKRRPIKVYASSLEGGDSSEGTFPLQARRQLGSWEDEMVGALGNQGAKAQTKVVPRTLTVTGLQDKKDGSYRMGHFRWGSPTAIKRYGGFMKPYTKQSHKPLITLLKHITLKNEQ</sequence>
<name>COLI_ONCKE</name>
<feature type="signal peptide" evidence="2">
    <location>
        <begin position="1"/>
        <end position="22"/>
    </location>
</feature>
<feature type="propeptide" id="PRO_0000025083" evidence="2">
    <location>
        <begin position="23"/>
        <end position="97"/>
    </location>
</feature>
<feature type="peptide" id="PRO_0000025084" description="Corticotropin">
    <location>
        <begin position="98"/>
        <end position="138"/>
    </location>
</feature>
<feature type="peptide" id="PRO_0000025085" description="Melanocyte-stimulating hormone alpha" evidence="4">
    <location>
        <begin position="98"/>
        <end position="112"/>
    </location>
</feature>
<feature type="peptide" id="PRO_0000025086" description="Corticotropin-like intermediary peptide">
    <location>
        <begin position="116"/>
        <end position="138"/>
    </location>
</feature>
<feature type="peptide" id="PRO_0000025087" description="Lipotropin beta">
    <location>
        <begin position="141"/>
        <end position="226"/>
    </location>
</feature>
<feature type="peptide" id="PRO_0000025088" description="Lipotropin gamma">
    <location>
        <begin position="141"/>
        <end position="195"/>
    </location>
</feature>
<feature type="peptide" id="PRO_0000025089" description="Melanocyte-stimulating hormone beta">
    <location>
        <begin position="179"/>
        <end position="195"/>
    </location>
</feature>
<feature type="peptide" id="PRO_0000025090" description="Beta-endorphin" evidence="3">
    <location>
        <begin position="198"/>
        <end position="226"/>
    </location>
</feature>
<feature type="peptide" id="PRO_0000025091" description="Met-enkephalin" evidence="3">
    <location>
        <begin position="198"/>
        <end position="202"/>
    </location>
</feature>
<feature type="modified residue" description="N-acetylserine; in Corticotropin" evidence="4">
    <location>
        <position position="98"/>
    </location>
</feature>
<feature type="modified residue" description="N-acetyltyrosine; in Beta-endorphin and Met-enkephalin" evidence="3">
    <location>
        <position position="198"/>
    </location>
</feature>
<accession>P10000</accession>
<accession>P01199</accession>
<accession>P01204</accession>
<accession>P87470</accession>
<accession>P87471</accession>
<accession>P87472</accession>
<accession>P87473</accession>
<accession>P87474</accession>
<accession>P87475</accession>
<accession>P87476</accession>
<accession>P87477</accession>
<accession>P87478</accession>
<accession>Q90521</accession>
<accession>Q92024</accession>
<keyword id="KW-0007">Acetylation</keyword>
<keyword id="KW-0165">Cleavage on pair of basic residues</keyword>
<keyword id="KW-0903">Direct protein sequencing</keyword>
<keyword id="KW-0257">Endorphin</keyword>
<keyword id="KW-0372">Hormone</keyword>
<keyword id="KW-0964">Secreted</keyword>
<keyword id="KW-0732">Signal</keyword>
<comment type="function">
    <molecule>Corticotropin</molecule>
    <text>Stimulates the adrenal glands to release cortisol.</text>
</comment>
<comment type="function">
    <molecule>Melanocyte-stimulating hormone alpha</molecule>
    <text>Anorexigenic peptide. Increases the pigmentation of skin by increasing melanin production in melanocytes.</text>
</comment>
<comment type="function">
    <molecule>Melanocyte-stimulating hormone beta</molecule>
    <text>Increases the pigmentation of skin by increasing melanin production in melanocytes.</text>
</comment>
<comment type="function">
    <molecule>Beta-endorphin</molecule>
    <text>Endogenous orexigenic opiate.</text>
</comment>
<comment type="function">
    <molecule>Met-enkephalin</molecule>
    <text>Endogenous opiate.</text>
</comment>
<comment type="subcellular location">
    <subcellularLocation>
        <location evidence="1">Secreted</location>
    </subcellularLocation>
    <text evidence="1">Melanocyte-stimulating hormone alpha and beta-endorphin are stored in separate granules in hypothalamic POMC neurons, suggesting that secretion may be under the control of different regulatory mechanisms.</text>
</comment>
<comment type="PTM">
    <text>Specific enzymatic cleavages at paired basic residues yield the different active peptides.</text>
</comment>
<comment type="similarity">
    <text evidence="5">Belongs to the POMC family.</text>
</comment>
<comment type="sequence caution" evidence="5">
    <conflict type="erroneous initiation">
        <sequence resource="EMBL-CDS" id="AAA49426"/>
    </conflict>
</comment>
<evidence type="ECO:0000250" key="1">
    <source>
        <dbReference type="UniProtKB" id="P01193"/>
    </source>
</evidence>
<evidence type="ECO:0000255" key="2"/>
<evidence type="ECO:0000269" key="3">
    <source>
    </source>
</evidence>
<evidence type="ECO:0000269" key="4">
    <source>
    </source>
</evidence>
<evidence type="ECO:0000305" key="5"/>
<organism>
    <name type="scientific">Oncorhynchus keta</name>
    <name type="common">Chum salmon</name>
    <name type="synonym">Salmo keta</name>
    <dbReference type="NCBI Taxonomy" id="8018"/>
    <lineage>
        <taxon>Eukaryota</taxon>
        <taxon>Metazoa</taxon>
        <taxon>Chordata</taxon>
        <taxon>Craniata</taxon>
        <taxon>Vertebrata</taxon>
        <taxon>Euteleostomi</taxon>
        <taxon>Actinopterygii</taxon>
        <taxon>Neopterygii</taxon>
        <taxon>Teleostei</taxon>
        <taxon>Protacanthopterygii</taxon>
        <taxon>Salmoniformes</taxon>
        <taxon>Salmonidae</taxon>
        <taxon>Salmoninae</taxon>
        <taxon>Oncorhynchus</taxon>
    </lineage>
</organism>
<gene>
    <name type="primary">pomc</name>
</gene>
<reference key="1">
    <citation type="journal article" date="1988" name="Comp. Biochem. Physiol.">
        <title>Absence of a gamma-melanocyte-stimulating hormone sequence in proopiomelanocortin mRNA of chum salmon Oncorhynchus keta.</title>
        <authorList>
            <person name="Kitahara N."/>
            <person name="Nishizawa T."/>
            <person name="Iida K."/>
            <person name="Okazaki H."/>
            <person name="Andoh T."/>
            <person name="Soma G."/>
        </authorList>
    </citation>
    <scope>NUCLEOTIDE SEQUENCE [MRNA]</scope>
</reference>
<reference key="2">
    <citation type="journal article" date="1984" name="Nucleic Acids Res.">
        <title>Nucleotide sequence of a cloned cDNA for proopiomelanocortin precursor of chum salmon, Onchorynchus keta.</title>
        <authorList>
            <person name="Soma G."/>
            <person name="Kitahara N."/>
            <person name="Nishizawa T."/>
            <person name="Nanami H."/>
            <person name="Kotake C."/>
            <person name="Okazaki H."/>
            <person name="Andoh T."/>
        </authorList>
    </citation>
    <scope>NUCLEOTIDE SEQUENCE [MRNA] OF 92-226</scope>
</reference>
<reference key="3">
    <citation type="journal article" date="1984" name="Biochem. Biophys. Res. Commun.">
        <title>Heterogeneity of 3' nontranslated regions in proopiomelanocortin (POMC) precursor mRNA of chum salmon Onchorynchus keta: polymorphism of the gene.</title>
        <authorList>
            <person name="Nishizawa T."/>
            <person name="Kitahara N."/>
            <person name="Nanami H."/>
            <person name="Hara N."/>
            <person name="Kotake C."/>
            <person name="Okazaki H."/>
            <person name="Andoh T."/>
            <person name="Soma G."/>
        </authorList>
    </citation>
    <scope>NUCLEOTIDE SEQUENCE [MRNA] OF 92-226</scope>
</reference>
<reference key="4">
    <citation type="journal article" date="1980" name="Biochem. Biophys. Res. Commun.">
        <title>Occurrence of a new melanocyte stimulating hormone in the salmon pituitary gland.</title>
        <authorList>
            <person name="Kawauchi H."/>
            <person name="Adachi Y."/>
            <person name="Tsubokawa M."/>
        </authorList>
    </citation>
    <scope>PROTEIN SEQUENCE OF 98-112</scope>
    <scope>ACETYLATION AT SER-98</scope>
</reference>
<reference key="5">
    <citation type="journal article" date="1979" name="Biochem. Biophys. Res. Commun.">
        <title>Isolation and primary structure of endorphin from salmon pituitary glands.</title>
        <authorList>
            <person name="Kawauchi H."/>
            <person name="Tsubokawa M."/>
            <person name="Muramoto K."/>
        </authorList>
    </citation>
    <scope>PROTEIN SEQUENCE OF 198-226</scope>
    <scope>ACETYLATION AT TYR-198</scope>
</reference>
<proteinExistence type="evidence at protein level"/>
<protein>
    <recommendedName>
        <fullName>Pro-opiomelanocortin</fullName>
        <shortName>POMC</shortName>
    </recommendedName>
    <alternativeName>
        <fullName>Corticotropin-lipotropin</fullName>
    </alternativeName>
    <component>
        <recommendedName>
            <fullName>Corticotropin</fullName>
        </recommendedName>
        <alternativeName>
            <fullName>Adrenocorticotropic hormone</fullName>
            <shortName>ACTH</shortName>
        </alternativeName>
    </component>
    <component>
        <recommendedName>
            <fullName>Melanocyte-stimulating hormone alpha</fullName>
            <shortName>Alpha-MSH</shortName>
        </recommendedName>
        <alternativeName>
            <fullName>Melanotropin alpha</fullName>
        </alternativeName>
    </component>
    <component>
        <recommendedName>
            <fullName>Corticotropin-like intermediary peptide</fullName>
            <shortName>CLIP</shortName>
        </recommendedName>
    </component>
    <component>
        <recommendedName>
            <fullName>Lipotropin beta</fullName>
        </recommendedName>
        <alternativeName>
            <fullName>Beta-LPH</fullName>
        </alternativeName>
    </component>
    <component>
        <recommendedName>
            <fullName>Lipotropin gamma</fullName>
        </recommendedName>
        <alternativeName>
            <fullName>Gamma-LPH</fullName>
        </alternativeName>
    </component>
    <component>
        <recommendedName>
            <fullName>Melanocyte-stimulating hormone beta</fullName>
            <shortName>Beta-MSH</shortName>
        </recommendedName>
        <alternativeName>
            <fullName>Melanotropin beta</fullName>
        </alternativeName>
    </component>
    <component>
        <recommendedName>
            <fullName>Beta-endorphin</fullName>
        </recommendedName>
    </component>
    <component>
        <recommendedName>
            <fullName>Met-enkephalin</fullName>
        </recommendedName>
    </component>
</protein>